<organism>
    <name type="scientific">Arabidopsis thaliana</name>
    <name type="common">Mouse-ear cress</name>
    <dbReference type="NCBI Taxonomy" id="3702"/>
    <lineage>
        <taxon>Eukaryota</taxon>
        <taxon>Viridiplantae</taxon>
        <taxon>Streptophyta</taxon>
        <taxon>Embryophyta</taxon>
        <taxon>Tracheophyta</taxon>
        <taxon>Spermatophyta</taxon>
        <taxon>Magnoliopsida</taxon>
        <taxon>eudicotyledons</taxon>
        <taxon>Gunneridae</taxon>
        <taxon>Pentapetalae</taxon>
        <taxon>rosids</taxon>
        <taxon>malvids</taxon>
        <taxon>Brassicales</taxon>
        <taxon>Brassicaceae</taxon>
        <taxon>Camelineae</taxon>
        <taxon>Arabidopsis</taxon>
    </lineage>
</organism>
<dbReference type="EC" id="2.1.1.64" evidence="1"/>
<dbReference type="EC" id="2.1.1.-" evidence="1"/>
<dbReference type="EC" id="2.1.1.114" evidence="1"/>
<dbReference type="EMBL" id="Y15055">
    <property type="protein sequence ID" value="CAA75340.1"/>
    <property type="molecule type" value="mRNA"/>
</dbReference>
<dbReference type="EMBL" id="AC004669">
    <property type="protein sequence ID" value="AAC20726.1"/>
    <property type="molecule type" value="Genomic_DNA"/>
</dbReference>
<dbReference type="EMBL" id="CP002685">
    <property type="protein sequence ID" value="AEC08458.1"/>
    <property type="molecule type" value="Genomic_DNA"/>
</dbReference>
<dbReference type="EMBL" id="CP002685">
    <property type="protein sequence ID" value="ANM62865.1"/>
    <property type="molecule type" value="Genomic_DNA"/>
</dbReference>
<dbReference type="EMBL" id="AY045828">
    <property type="protein sequence ID" value="AAK76502.1"/>
    <property type="molecule type" value="mRNA"/>
</dbReference>
<dbReference type="EMBL" id="AY091366">
    <property type="protein sequence ID" value="AAM14305.1"/>
    <property type="molecule type" value="mRNA"/>
</dbReference>
<dbReference type="PIR" id="C84714">
    <property type="entry name" value="C84714"/>
</dbReference>
<dbReference type="PIR" id="T52284">
    <property type="entry name" value="T52284"/>
</dbReference>
<dbReference type="RefSeq" id="NP_001324991.1">
    <property type="nucleotide sequence ID" value="NM_001336307.1"/>
</dbReference>
<dbReference type="RefSeq" id="NP_180649.1">
    <property type="nucleotide sequence ID" value="NM_128644.4"/>
</dbReference>
<dbReference type="SMR" id="O49354"/>
<dbReference type="BioGRID" id="2991">
    <property type="interactions" value="3"/>
</dbReference>
<dbReference type="FunCoup" id="O49354">
    <property type="interactions" value="2722"/>
</dbReference>
<dbReference type="IntAct" id="O49354">
    <property type="interactions" value="3"/>
</dbReference>
<dbReference type="STRING" id="3702.O49354"/>
<dbReference type="PaxDb" id="3702-AT2G30920.1"/>
<dbReference type="ProteomicsDB" id="241178"/>
<dbReference type="EnsemblPlants" id="AT2G30920.1">
    <property type="protein sequence ID" value="AT2G30920.1"/>
    <property type="gene ID" value="AT2G30920"/>
</dbReference>
<dbReference type="EnsemblPlants" id="AT2G30920.2">
    <property type="protein sequence ID" value="AT2G30920.2"/>
    <property type="gene ID" value="AT2G30920"/>
</dbReference>
<dbReference type="GeneID" id="817642"/>
<dbReference type="Gramene" id="AT2G30920.1">
    <property type="protein sequence ID" value="AT2G30920.1"/>
    <property type="gene ID" value="AT2G30920"/>
</dbReference>
<dbReference type="Gramene" id="AT2G30920.2">
    <property type="protein sequence ID" value="AT2G30920.2"/>
    <property type="gene ID" value="AT2G30920"/>
</dbReference>
<dbReference type="KEGG" id="ath:AT2G30920"/>
<dbReference type="Araport" id="AT2G30920"/>
<dbReference type="TAIR" id="AT2G30920">
    <property type="gene designation" value="COQ3"/>
</dbReference>
<dbReference type="eggNOG" id="KOG1270">
    <property type="taxonomic scope" value="Eukaryota"/>
</dbReference>
<dbReference type="HOGENOM" id="CLU_042432_2_1_1"/>
<dbReference type="InParanoid" id="O49354"/>
<dbReference type="OMA" id="LASRWWD"/>
<dbReference type="OrthoDB" id="3265906at2759"/>
<dbReference type="PhylomeDB" id="O49354"/>
<dbReference type="BRENDA" id="2.1.1.114">
    <property type="organism ID" value="399"/>
</dbReference>
<dbReference type="BRENDA" id="2.1.1.64">
    <property type="organism ID" value="399"/>
</dbReference>
<dbReference type="UniPathway" id="UPA00232"/>
<dbReference type="PRO" id="PR:O49354"/>
<dbReference type="Proteomes" id="UP000006548">
    <property type="component" value="Chromosome 2"/>
</dbReference>
<dbReference type="ExpressionAtlas" id="O49354">
    <property type="expression patterns" value="baseline and differential"/>
</dbReference>
<dbReference type="GO" id="GO:0031314">
    <property type="term" value="C:extrinsic component of mitochondrial inner membrane"/>
    <property type="evidence" value="ECO:0007669"/>
    <property type="project" value="UniProtKB-UniRule"/>
</dbReference>
<dbReference type="GO" id="GO:0005740">
    <property type="term" value="C:mitochondrial envelope"/>
    <property type="evidence" value="ECO:0000314"/>
    <property type="project" value="TAIR"/>
</dbReference>
<dbReference type="GO" id="GO:0061542">
    <property type="term" value="F:3-demethylubiquinol 3-O-methyltransferase activity"/>
    <property type="evidence" value="ECO:0007669"/>
    <property type="project" value="UniProtKB-UniRule"/>
</dbReference>
<dbReference type="GO" id="GO:0120537">
    <property type="term" value="F:3-demethylubiquinone 3-O-methyltransferase activity"/>
    <property type="evidence" value="ECO:0007669"/>
    <property type="project" value="RHEA"/>
</dbReference>
<dbReference type="GO" id="GO:0010420">
    <property type="term" value="F:polyprenyldihydroxybenzoate methyltransferase activity"/>
    <property type="evidence" value="ECO:0000316"/>
    <property type="project" value="TAIR"/>
</dbReference>
<dbReference type="GO" id="GO:0032259">
    <property type="term" value="P:methylation"/>
    <property type="evidence" value="ECO:0007669"/>
    <property type="project" value="UniProtKB-KW"/>
</dbReference>
<dbReference type="GO" id="GO:0006744">
    <property type="term" value="P:ubiquinone biosynthetic process"/>
    <property type="evidence" value="ECO:0000316"/>
    <property type="project" value="TAIR"/>
</dbReference>
<dbReference type="CDD" id="cd02440">
    <property type="entry name" value="AdoMet_MTases"/>
    <property type="match status" value="1"/>
</dbReference>
<dbReference type="Gene3D" id="3.40.50.150">
    <property type="entry name" value="Vaccinia Virus protein VP39"/>
    <property type="match status" value="1"/>
</dbReference>
<dbReference type="HAMAP" id="MF_00472">
    <property type="entry name" value="UbiG"/>
    <property type="match status" value="1"/>
</dbReference>
<dbReference type="InterPro" id="IPR013216">
    <property type="entry name" value="Methyltransf_11"/>
</dbReference>
<dbReference type="InterPro" id="IPR029063">
    <property type="entry name" value="SAM-dependent_MTases_sf"/>
</dbReference>
<dbReference type="InterPro" id="IPR010233">
    <property type="entry name" value="UbiG_MeTrfase"/>
</dbReference>
<dbReference type="NCBIfam" id="TIGR01983">
    <property type="entry name" value="UbiG"/>
    <property type="match status" value="1"/>
</dbReference>
<dbReference type="PANTHER" id="PTHR43464">
    <property type="entry name" value="METHYLTRANSFERASE"/>
    <property type="match status" value="1"/>
</dbReference>
<dbReference type="PANTHER" id="PTHR43464:SF19">
    <property type="entry name" value="UBIQUINONE BIOSYNTHESIS O-METHYLTRANSFERASE, MITOCHONDRIAL"/>
    <property type="match status" value="1"/>
</dbReference>
<dbReference type="Pfam" id="PF08241">
    <property type="entry name" value="Methyltransf_11"/>
    <property type="match status" value="1"/>
</dbReference>
<dbReference type="SUPFAM" id="SSF53335">
    <property type="entry name" value="S-adenosyl-L-methionine-dependent methyltransferases"/>
    <property type="match status" value="1"/>
</dbReference>
<sequence>MLASVRVNQLQRLLLSARRLSSSPIIPPSRLLHQRLFSTSDTDASAASFSSSHPKIQTLEGKASNKSRSTSSTTSLNEDELAKFSAIADTWWHSEGPFKPLHQMNPTRLAFIRSTLCRHFSKDPSSAKPFEGLKFIDIGCGGGLLSEPLARMGATVTGVDAVDKNVKIARLHADMDPVTSTIEYLCTTAEKLADEGRKFDAVLSLEVIEHVANPAEFCKSLSALTIPNGATVLSTINRTMRAYASTIVGAEYILRWLPKGTHQWSSFVTPEEMSMILQRASVDVKEIAGFVYNPITGRWLLSDDISVNYIAYGTKRKDLGDI</sequence>
<comment type="function">
    <text evidence="1">O-methyltransferase required for two non-consecutive steps during ubiquinone biosynthesis. Catalyzes the 2 O-methylation of 3,4-dihydroxy-5-(all-trans-polyprenyl)benzoic acid into 4-hydroxy-3-methoxy-5-(all-trans-polyprenyl)benzoic acid. Also catalyzes the last step of ubiquinone biosynthesis by mediating methylation of 3-demethylubiquinone into ubiquinone. Also able to mediate the methylation of 3-demethylubiquinol into ubiquinol.</text>
</comment>
<comment type="catalytic activity">
    <reaction evidence="1">
        <text>a 3,4-dihydroxy-5-(all-trans-polyprenyl)benzoate + S-adenosyl-L-methionine = a 4-hydroxy-3-methoxy-5-(all-trans-polyprenyl)benzoate + S-adenosyl-L-homocysteine + H(+)</text>
        <dbReference type="Rhea" id="RHEA:44452"/>
        <dbReference type="Rhea" id="RHEA-COMP:10930"/>
        <dbReference type="Rhea" id="RHEA-COMP:10931"/>
        <dbReference type="ChEBI" id="CHEBI:15378"/>
        <dbReference type="ChEBI" id="CHEBI:57856"/>
        <dbReference type="ChEBI" id="CHEBI:59789"/>
        <dbReference type="ChEBI" id="CHEBI:64694"/>
        <dbReference type="ChEBI" id="CHEBI:84443"/>
        <dbReference type="EC" id="2.1.1.114"/>
    </reaction>
</comment>
<comment type="catalytic activity">
    <reaction evidence="1">
        <text>a 3-demethylubiquinone + S-adenosyl-L-methionine = a ubiquinone + S-adenosyl-L-homocysteine</text>
        <dbReference type="Rhea" id="RHEA:81215"/>
        <dbReference type="Rhea" id="RHEA-COMP:9565"/>
        <dbReference type="Rhea" id="RHEA-COMP:19654"/>
        <dbReference type="ChEBI" id="CHEBI:16389"/>
        <dbReference type="ChEBI" id="CHEBI:57856"/>
        <dbReference type="ChEBI" id="CHEBI:59789"/>
        <dbReference type="ChEBI" id="CHEBI:231825"/>
    </reaction>
</comment>
<comment type="catalytic activity">
    <reaction evidence="1">
        <text>a 3-demethylubiquinol + S-adenosyl-L-methionine = a ubiquinol + S-adenosyl-L-homocysteine + H(+)</text>
        <dbReference type="Rhea" id="RHEA:44380"/>
        <dbReference type="Rhea" id="RHEA-COMP:9566"/>
        <dbReference type="Rhea" id="RHEA-COMP:10914"/>
        <dbReference type="ChEBI" id="CHEBI:15378"/>
        <dbReference type="ChEBI" id="CHEBI:17976"/>
        <dbReference type="ChEBI" id="CHEBI:57856"/>
        <dbReference type="ChEBI" id="CHEBI:59789"/>
        <dbReference type="ChEBI" id="CHEBI:84422"/>
        <dbReference type="EC" id="2.1.1.64"/>
    </reaction>
</comment>
<comment type="cofactor">
    <cofactor evidence="1">
        <name>Mg(2+)</name>
        <dbReference type="ChEBI" id="CHEBI:18420"/>
    </cofactor>
</comment>
<comment type="pathway">
    <text evidence="1">Cofactor biosynthesis; ubiquinone biosynthesis.</text>
</comment>
<comment type="subunit">
    <text evidence="1">Component of a multi-subunit COQ enzyme complex.</text>
</comment>
<comment type="subcellular location">
    <subcellularLocation>
        <location evidence="1 5">Mitochondrion inner membrane</location>
        <topology evidence="1">Peripheral membrane protein</topology>
        <orientation evidence="1">Matrix side</orientation>
    </subcellularLocation>
</comment>
<comment type="similarity">
    <text evidence="1">Belongs to the class I-like SAM-binding methyltransferase superfamily. UbiG/COQ3 family.</text>
</comment>
<accession>O49354</accession>
<accession>O80857</accession>
<accession>Q94AS6</accession>
<gene>
    <name evidence="1" type="primary">COQ3</name>
    <name type="synonym">EMB3002</name>
    <name type="ordered locus">At2g30920</name>
    <name type="ORF">F7F1.13</name>
</gene>
<feature type="transit peptide" description="Mitochondrion" evidence="3">
    <location>
        <begin position="1"/>
        <end position="37"/>
    </location>
</feature>
<feature type="chain" id="PRO_0000035929" description="Ubiquinone biosynthesis O-methyltransferase, mitochondrial">
    <location>
        <begin position="38"/>
        <end position="322"/>
    </location>
</feature>
<feature type="region of interest" description="Disordered" evidence="2">
    <location>
        <begin position="46"/>
        <end position="75"/>
    </location>
</feature>
<feature type="binding site" evidence="1">
    <location>
        <position position="108"/>
    </location>
    <ligand>
        <name>S-adenosyl-L-methionine</name>
        <dbReference type="ChEBI" id="CHEBI:59789"/>
    </ligand>
</feature>
<feature type="binding site" evidence="1">
    <location>
        <position position="139"/>
    </location>
    <ligand>
        <name>S-adenosyl-L-methionine</name>
        <dbReference type="ChEBI" id="CHEBI:59789"/>
    </ligand>
</feature>
<feature type="binding site" evidence="1">
    <location>
        <position position="160"/>
    </location>
    <ligand>
        <name>S-adenosyl-L-methionine</name>
        <dbReference type="ChEBI" id="CHEBI:59789"/>
    </ligand>
</feature>
<feature type="binding site" evidence="1">
    <location>
        <position position="205"/>
    </location>
    <ligand>
        <name>S-adenosyl-L-methionine</name>
        <dbReference type="ChEBI" id="CHEBI:59789"/>
    </ligand>
</feature>
<feature type="binding site" evidence="1">
    <location>
        <position position="206"/>
    </location>
    <ligand>
        <name>Mg(2+)</name>
        <dbReference type="ChEBI" id="CHEBI:18420"/>
    </ligand>
</feature>
<feature type="binding site" evidence="1">
    <location>
        <position position="209"/>
    </location>
    <ligand>
        <name>Mg(2+)</name>
        <dbReference type="ChEBI" id="CHEBI:18420"/>
    </ligand>
</feature>
<feature type="binding site" evidence="1">
    <location>
        <position position="210"/>
    </location>
    <ligand>
        <name>Mg(2+)</name>
        <dbReference type="ChEBI" id="CHEBI:18420"/>
    </ligand>
</feature>
<feature type="sequence conflict" description="In Ref. 1; CAA75340." evidence="4" ref="1">
    <original>A</original>
    <variation>T</variation>
    <location>
        <position position="311"/>
    </location>
</feature>
<protein>
    <recommendedName>
        <fullName evidence="1">Ubiquinone biosynthesis O-methyltransferase, mitochondrial</fullName>
    </recommendedName>
    <alternativeName>
        <fullName evidence="1">3-demethylubiquinol 3-O-methyltransferase</fullName>
        <ecNumber evidence="1">2.1.1.64</ecNumber>
    </alternativeName>
    <alternativeName>
        <fullName evidence="1">3-demethylubiquinone 3-O-methyltransferase</fullName>
        <ecNumber evidence="1">2.1.1.-</ecNumber>
    </alternativeName>
    <alternativeName>
        <fullName>EMBRYO DEFECTIVE 3002</fullName>
    </alternativeName>
    <alternativeName>
        <fullName evidence="1">Polyprenyldihydroxybenzoate methyltransferase</fullName>
        <ecNumber evidence="1">2.1.1.114</ecNumber>
    </alternativeName>
</protein>
<proteinExistence type="evidence at protein level"/>
<evidence type="ECO:0000255" key="1">
    <source>
        <dbReference type="HAMAP-Rule" id="MF_03190"/>
    </source>
</evidence>
<evidence type="ECO:0000256" key="2">
    <source>
        <dbReference type="SAM" id="MobiDB-lite"/>
    </source>
</evidence>
<evidence type="ECO:0000269" key="3">
    <source>
    </source>
</evidence>
<evidence type="ECO:0000305" key="4"/>
<evidence type="ECO:0000305" key="5">
    <source>
    </source>
</evidence>
<keyword id="KW-0460">Magnesium</keyword>
<keyword id="KW-0472">Membrane</keyword>
<keyword id="KW-0479">Metal-binding</keyword>
<keyword id="KW-0489">Methyltransferase</keyword>
<keyword id="KW-0496">Mitochondrion</keyword>
<keyword id="KW-0999">Mitochondrion inner membrane</keyword>
<keyword id="KW-1185">Reference proteome</keyword>
<keyword id="KW-0949">S-adenosyl-L-methionine</keyword>
<keyword id="KW-0808">Transferase</keyword>
<keyword id="KW-0809">Transit peptide</keyword>
<keyword id="KW-0831">Ubiquinone biosynthesis</keyword>
<name>COQ3_ARATH</name>
<reference key="1">
    <citation type="journal article" date="1998" name="Plant J.">
        <title>Cloning and functional expression of AtCOQ3, the Arabidopsis homologue of the yeast COQ3 gene, encoding a methyltransferase from plant mitochondria involved in ubiquinone biosynthesis.</title>
        <authorList>
            <person name="Avelange-Macherel M.H."/>
            <person name="Joyard J."/>
        </authorList>
    </citation>
    <scope>NUCLEOTIDE SEQUENCE [MRNA]</scope>
    <source>
        <strain>cv. Landsberg erecta</strain>
    </source>
</reference>
<reference key="2">
    <citation type="journal article" date="1999" name="Nature">
        <title>Sequence and analysis of chromosome 2 of the plant Arabidopsis thaliana.</title>
        <authorList>
            <person name="Lin X."/>
            <person name="Kaul S."/>
            <person name="Rounsley S.D."/>
            <person name="Shea T.P."/>
            <person name="Benito M.-I."/>
            <person name="Town C.D."/>
            <person name="Fujii C.Y."/>
            <person name="Mason T.M."/>
            <person name="Bowman C.L."/>
            <person name="Barnstead M.E."/>
            <person name="Feldblyum T.V."/>
            <person name="Buell C.R."/>
            <person name="Ketchum K.A."/>
            <person name="Lee J.J."/>
            <person name="Ronning C.M."/>
            <person name="Koo H.L."/>
            <person name="Moffat K.S."/>
            <person name="Cronin L.A."/>
            <person name="Shen M."/>
            <person name="Pai G."/>
            <person name="Van Aken S."/>
            <person name="Umayam L."/>
            <person name="Tallon L.J."/>
            <person name="Gill J.E."/>
            <person name="Adams M.D."/>
            <person name="Carrera A.J."/>
            <person name="Creasy T.H."/>
            <person name="Goodman H.M."/>
            <person name="Somerville C.R."/>
            <person name="Copenhaver G.P."/>
            <person name="Preuss D."/>
            <person name="Nierman W.C."/>
            <person name="White O."/>
            <person name="Eisen J.A."/>
            <person name="Salzberg S.L."/>
            <person name="Fraser C.M."/>
            <person name="Venter J.C."/>
        </authorList>
    </citation>
    <scope>NUCLEOTIDE SEQUENCE [LARGE SCALE GENOMIC DNA]</scope>
    <source>
        <strain>cv. Columbia</strain>
    </source>
</reference>
<reference key="3">
    <citation type="journal article" date="2017" name="Plant J.">
        <title>Araport11: a complete reannotation of the Arabidopsis thaliana reference genome.</title>
        <authorList>
            <person name="Cheng C.Y."/>
            <person name="Krishnakumar V."/>
            <person name="Chan A.P."/>
            <person name="Thibaud-Nissen F."/>
            <person name="Schobel S."/>
            <person name="Town C.D."/>
        </authorList>
    </citation>
    <scope>GENOME REANNOTATION</scope>
    <source>
        <strain>cv. Columbia</strain>
    </source>
</reference>
<reference key="4">
    <citation type="journal article" date="2003" name="Science">
        <title>Empirical analysis of transcriptional activity in the Arabidopsis genome.</title>
        <authorList>
            <person name="Yamada K."/>
            <person name="Lim J."/>
            <person name="Dale J.M."/>
            <person name="Chen H."/>
            <person name="Shinn P."/>
            <person name="Palm C.J."/>
            <person name="Southwick A.M."/>
            <person name="Wu H.C."/>
            <person name="Kim C.J."/>
            <person name="Nguyen M."/>
            <person name="Pham P.K."/>
            <person name="Cheuk R.F."/>
            <person name="Karlin-Newmann G."/>
            <person name="Liu S.X."/>
            <person name="Lam B."/>
            <person name="Sakano H."/>
            <person name="Wu T."/>
            <person name="Yu G."/>
            <person name="Miranda M."/>
            <person name="Quach H.L."/>
            <person name="Tripp M."/>
            <person name="Chang C.H."/>
            <person name="Lee J.M."/>
            <person name="Toriumi M.J."/>
            <person name="Chan M.M."/>
            <person name="Tang C.C."/>
            <person name="Onodera C.S."/>
            <person name="Deng J.M."/>
            <person name="Akiyama K."/>
            <person name="Ansari Y."/>
            <person name="Arakawa T."/>
            <person name="Banh J."/>
            <person name="Banno F."/>
            <person name="Bowser L."/>
            <person name="Brooks S.Y."/>
            <person name="Carninci P."/>
            <person name="Chao Q."/>
            <person name="Choy N."/>
            <person name="Enju A."/>
            <person name="Goldsmith A.D."/>
            <person name="Gurjal M."/>
            <person name="Hansen N.F."/>
            <person name="Hayashizaki Y."/>
            <person name="Johnson-Hopson C."/>
            <person name="Hsuan V.W."/>
            <person name="Iida K."/>
            <person name="Karnes M."/>
            <person name="Khan S."/>
            <person name="Koesema E."/>
            <person name="Ishida J."/>
            <person name="Jiang P.X."/>
            <person name="Jones T."/>
            <person name="Kawai J."/>
            <person name="Kamiya A."/>
            <person name="Meyers C."/>
            <person name="Nakajima M."/>
            <person name="Narusaka M."/>
            <person name="Seki M."/>
            <person name="Sakurai T."/>
            <person name="Satou M."/>
            <person name="Tamse R."/>
            <person name="Vaysberg M."/>
            <person name="Wallender E.K."/>
            <person name="Wong C."/>
            <person name="Yamamura Y."/>
            <person name="Yuan S."/>
            <person name="Shinozaki K."/>
            <person name="Davis R.W."/>
            <person name="Theologis A."/>
            <person name="Ecker J.R."/>
        </authorList>
    </citation>
    <scope>NUCLEOTIDE SEQUENCE [LARGE SCALE MRNA]</scope>
    <source>
        <strain>cv. Columbia</strain>
    </source>
</reference>
<reference key="5">
    <citation type="journal article" date="2015" name="J. Exp. Bot.">
        <title>Identification of cleavage sites and substrate proteins for two mitochondrial intermediate peptidases in Arabidopsis thaliana.</title>
        <authorList>
            <person name="Carrie C."/>
            <person name="Venne A.S."/>
            <person name="Zahedi R.P."/>
            <person name="Soll J."/>
        </authorList>
    </citation>
    <scope>IDENTIFICATION BY MASS SPECTROMETRY</scope>
    <scope>CLEAVAGE OF TRANSIT PEPTIDE AFTER PHE-37</scope>
</reference>